<reference key="1">
    <citation type="journal article" date="2005" name="Nature">
        <title>The genome of the social amoeba Dictyostelium discoideum.</title>
        <authorList>
            <person name="Eichinger L."/>
            <person name="Pachebat J.A."/>
            <person name="Gloeckner G."/>
            <person name="Rajandream M.A."/>
            <person name="Sucgang R."/>
            <person name="Berriman M."/>
            <person name="Song J."/>
            <person name="Olsen R."/>
            <person name="Szafranski K."/>
            <person name="Xu Q."/>
            <person name="Tunggal B."/>
            <person name="Kummerfeld S."/>
            <person name="Madera M."/>
            <person name="Konfortov B.A."/>
            <person name="Rivero F."/>
            <person name="Bankier A.T."/>
            <person name="Lehmann R."/>
            <person name="Hamlin N."/>
            <person name="Davies R."/>
            <person name="Gaudet P."/>
            <person name="Fey P."/>
            <person name="Pilcher K."/>
            <person name="Chen G."/>
            <person name="Saunders D."/>
            <person name="Sodergren E.J."/>
            <person name="Davis P."/>
            <person name="Kerhornou A."/>
            <person name="Nie X."/>
            <person name="Hall N."/>
            <person name="Anjard C."/>
            <person name="Hemphill L."/>
            <person name="Bason N."/>
            <person name="Farbrother P."/>
            <person name="Desany B."/>
            <person name="Just E."/>
            <person name="Morio T."/>
            <person name="Rost R."/>
            <person name="Churcher C.M."/>
            <person name="Cooper J."/>
            <person name="Haydock S."/>
            <person name="van Driessche N."/>
            <person name="Cronin A."/>
            <person name="Goodhead I."/>
            <person name="Muzny D.M."/>
            <person name="Mourier T."/>
            <person name="Pain A."/>
            <person name="Lu M."/>
            <person name="Harper D."/>
            <person name="Lindsay R."/>
            <person name="Hauser H."/>
            <person name="James K.D."/>
            <person name="Quiles M."/>
            <person name="Madan Babu M."/>
            <person name="Saito T."/>
            <person name="Buchrieser C."/>
            <person name="Wardroper A."/>
            <person name="Felder M."/>
            <person name="Thangavelu M."/>
            <person name="Johnson D."/>
            <person name="Knights A."/>
            <person name="Loulseged H."/>
            <person name="Mungall K.L."/>
            <person name="Oliver K."/>
            <person name="Price C."/>
            <person name="Quail M.A."/>
            <person name="Urushihara H."/>
            <person name="Hernandez J."/>
            <person name="Rabbinowitsch E."/>
            <person name="Steffen D."/>
            <person name="Sanders M."/>
            <person name="Ma J."/>
            <person name="Kohara Y."/>
            <person name="Sharp S."/>
            <person name="Simmonds M.N."/>
            <person name="Spiegler S."/>
            <person name="Tivey A."/>
            <person name="Sugano S."/>
            <person name="White B."/>
            <person name="Walker D."/>
            <person name="Woodward J.R."/>
            <person name="Winckler T."/>
            <person name="Tanaka Y."/>
            <person name="Shaulsky G."/>
            <person name="Schleicher M."/>
            <person name="Weinstock G.M."/>
            <person name="Rosenthal A."/>
            <person name="Cox E.C."/>
            <person name="Chisholm R.L."/>
            <person name="Gibbs R.A."/>
            <person name="Loomis W.F."/>
            <person name="Platzer M."/>
            <person name="Kay R.R."/>
            <person name="Williams J.G."/>
            <person name="Dear P.H."/>
            <person name="Noegel A.A."/>
            <person name="Barrell B.G."/>
            <person name="Kuspa A."/>
        </authorList>
    </citation>
    <scope>NUCLEOTIDE SEQUENCE [LARGE SCALE GENOMIC DNA]</scope>
    <source>
        <strain>AX4</strain>
    </source>
</reference>
<comment type="function">
    <text evidence="1">Probable peripherally associated component of the endosomal sorting required for transport complex III (ESCRT-III) which is involved in multivesicular bodies (MVBs) formation and sorting of endosomal cargo proteins into MVBs. MVBs contain intraluminal vesicles (ILVs) that are generated by invagination and scission from the limiting membrane of the endosome and are delivered to lysosomes enabling degradation of membrane proteins (By similarity).</text>
</comment>
<comment type="subunit">
    <text evidence="1">Probable peripherally associated component of the endosomal sorting required for transport complex III (ESCRT-III).</text>
</comment>
<comment type="subcellular location">
    <subcellularLocation>
        <location evidence="1">Endosome membrane</location>
        <topology evidence="1">Peripheral membrane protein</topology>
    </subcellularLocation>
</comment>
<comment type="similarity">
    <text evidence="4">Belongs to the SNF7 family.</text>
</comment>
<dbReference type="EMBL" id="AAFI02000107">
    <property type="protein sequence ID" value="EAL63422.1"/>
    <property type="molecule type" value="Genomic_DNA"/>
</dbReference>
<dbReference type="RefSeq" id="XP_636927.1">
    <property type="nucleotide sequence ID" value="XM_631835.1"/>
</dbReference>
<dbReference type="SMR" id="Q54JK4"/>
<dbReference type="FunCoup" id="Q54JK4">
    <property type="interactions" value="774"/>
</dbReference>
<dbReference type="STRING" id="44689.Q54JK4"/>
<dbReference type="PaxDb" id="44689-DDB0234057"/>
<dbReference type="EnsemblProtists" id="EAL63422">
    <property type="protein sequence ID" value="EAL63422"/>
    <property type="gene ID" value="DDB_G0287993"/>
</dbReference>
<dbReference type="GeneID" id="8626402"/>
<dbReference type="KEGG" id="ddi:DDB_G0287993"/>
<dbReference type="dictyBase" id="DDB_G0287993">
    <property type="gene designation" value="vps60"/>
</dbReference>
<dbReference type="VEuPathDB" id="AmoebaDB:DDB_G0287993"/>
<dbReference type="eggNOG" id="KOG1655">
    <property type="taxonomic scope" value="Eukaryota"/>
</dbReference>
<dbReference type="HOGENOM" id="CLU_079409_1_0_1"/>
<dbReference type="InParanoid" id="Q54JK4"/>
<dbReference type="OMA" id="GVKQMQK"/>
<dbReference type="PhylomeDB" id="Q54JK4"/>
<dbReference type="Reactome" id="R-DDI-917729">
    <property type="pathway name" value="Endosomal Sorting Complex Required For Transport (ESCRT)"/>
</dbReference>
<dbReference type="PRO" id="PR:Q54JK4"/>
<dbReference type="Proteomes" id="UP000002195">
    <property type="component" value="Chromosome 5"/>
</dbReference>
<dbReference type="GO" id="GO:0010008">
    <property type="term" value="C:endosome membrane"/>
    <property type="evidence" value="ECO:0007669"/>
    <property type="project" value="UniProtKB-SubCell"/>
</dbReference>
<dbReference type="GO" id="GO:0005771">
    <property type="term" value="C:multivesicular body"/>
    <property type="evidence" value="ECO:0000318"/>
    <property type="project" value="GO_Central"/>
</dbReference>
<dbReference type="GO" id="GO:0032511">
    <property type="term" value="P:late endosome to vacuole transport via multivesicular body sorting pathway"/>
    <property type="evidence" value="ECO:0000318"/>
    <property type="project" value="GO_Central"/>
</dbReference>
<dbReference type="GO" id="GO:0015031">
    <property type="term" value="P:protein transport"/>
    <property type="evidence" value="ECO:0007669"/>
    <property type="project" value="UniProtKB-KW"/>
</dbReference>
<dbReference type="GO" id="GO:0006900">
    <property type="term" value="P:vesicle budding from membrane"/>
    <property type="evidence" value="ECO:0000318"/>
    <property type="project" value="GO_Central"/>
</dbReference>
<dbReference type="Gene3D" id="6.10.250.1710">
    <property type="match status" value="1"/>
</dbReference>
<dbReference type="InterPro" id="IPR005024">
    <property type="entry name" value="Snf7_fam"/>
</dbReference>
<dbReference type="PANTHER" id="PTHR22761">
    <property type="entry name" value="CHARGED MULTIVESICULAR BODY PROTEIN"/>
    <property type="match status" value="1"/>
</dbReference>
<dbReference type="PANTHER" id="PTHR22761:SF12">
    <property type="entry name" value="CHARGED MULTIVESICULAR BODY PROTEIN 5"/>
    <property type="match status" value="1"/>
</dbReference>
<dbReference type="Pfam" id="PF03357">
    <property type="entry name" value="Snf7"/>
    <property type="match status" value="1"/>
</dbReference>
<evidence type="ECO:0000250" key="1"/>
<evidence type="ECO:0000255" key="2"/>
<evidence type="ECO:0000256" key="3">
    <source>
        <dbReference type="SAM" id="MobiDB-lite"/>
    </source>
</evidence>
<evidence type="ECO:0000305" key="4"/>
<name>CHMP5_DICDI</name>
<organism>
    <name type="scientific">Dictyostelium discoideum</name>
    <name type="common">Social amoeba</name>
    <dbReference type="NCBI Taxonomy" id="44689"/>
    <lineage>
        <taxon>Eukaryota</taxon>
        <taxon>Amoebozoa</taxon>
        <taxon>Evosea</taxon>
        <taxon>Eumycetozoa</taxon>
        <taxon>Dictyostelia</taxon>
        <taxon>Dictyosteliales</taxon>
        <taxon>Dictyosteliaceae</taxon>
        <taxon>Dictyostelium</taxon>
    </lineage>
</organism>
<gene>
    <name type="primary">chmp5</name>
    <name type="synonym">vps60</name>
    <name type="ORF">DDB_G0287993</name>
</gene>
<sequence>MKRFFGVSNNQPAPTLDEATKRIGGRMGQMDEKINGLNQELLAYDKQIKATRPGPAQNAIKQKAIRVLQQKKMYERQRDQMASTSFNMEQTKFATESMRDTITTVSAMKQGAKDMKTQLKHIKIEDVDDMQDEMQDLLDYNNEIQESLGRAYQTPDTLDESELEAELMSMGEELELEASMPSYLMTPSVPTTDPHQSSVDEYGLPIGQEASQQVV</sequence>
<keyword id="KW-0175">Coiled coil</keyword>
<keyword id="KW-0967">Endosome</keyword>
<keyword id="KW-0472">Membrane</keyword>
<keyword id="KW-0653">Protein transport</keyword>
<keyword id="KW-1185">Reference proteome</keyword>
<keyword id="KW-0813">Transport</keyword>
<accession>Q54JK4</accession>
<protein>
    <recommendedName>
        <fullName>Charged multivesicular body protein 5</fullName>
    </recommendedName>
    <alternativeName>
        <fullName>Vacuolar protein-sorting-associated protein 60</fullName>
    </alternativeName>
</protein>
<feature type="chain" id="PRO_0000367441" description="Charged multivesicular body protein 5">
    <location>
        <begin position="1"/>
        <end position="215"/>
    </location>
</feature>
<feature type="region of interest" description="Disordered" evidence="3">
    <location>
        <begin position="186"/>
        <end position="215"/>
    </location>
</feature>
<feature type="coiled-coil region" evidence="2">
    <location>
        <begin position="29"/>
        <end position="81"/>
    </location>
</feature>
<feature type="compositionally biased region" description="Polar residues" evidence="3">
    <location>
        <begin position="188"/>
        <end position="199"/>
    </location>
</feature>
<proteinExistence type="inferred from homology"/>